<feature type="chain" id="PRO_1000074053" description="LexA repressor">
    <location>
        <begin position="1"/>
        <end position="231"/>
    </location>
</feature>
<feature type="DNA-binding region" description="H-T-H motif" evidence="1">
    <location>
        <begin position="26"/>
        <end position="46"/>
    </location>
</feature>
<feature type="active site" description="For autocatalytic cleavage activity" evidence="1">
    <location>
        <position position="152"/>
    </location>
</feature>
<feature type="active site" description="For autocatalytic cleavage activity" evidence="1">
    <location>
        <position position="190"/>
    </location>
</feature>
<feature type="site" description="Cleavage; by autolysis" evidence="1">
    <location>
        <begin position="116"/>
        <end position="117"/>
    </location>
</feature>
<evidence type="ECO:0000255" key="1">
    <source>
        <dbReference type="HAMAP-Rule" id="MF_00015"/>
    </source>
</evidence>
<gene>
    <name evidence="1" type="primary">lexA</name>
    <name type="ordered locus">Dshi_1803</name>
</gene>
<reference key="1">
    <citation type="journal article" date="2010" name="ISME J.">
        <title>The complete genome sequence of the algal symbiont Dinoroseobacter shibae: a hitchhiker's guide to life in the sea.</title>
        <authorList>
            <person name="Wagner-Dobler I."/>
            <person name="Ballhausen B."/>
            <person name="Berger M."/>
            <person name="Brinkhoff T."/>
            <person name="Buchholz I."/>
            <person name="Bunk B."/>
            <person name="Cypionka H."/>
            <person name="Daniel R."/>
            <person name="Drepper T."/>
            <person name="Gerdts G."/>
            <person name="Hahnke S."/>
            <person name="Han C."/>
            <person name="Jahn D."/>
            <person name="Kalhoefer D."/>
            <person name="Kiss H."/>
            <person name="Klenk H.P."/>
            <person name="Kyrpides N."/>
            <person name="Liebl W."/>
            <person name="Liesegang H."/>
            <person name="Meincke L."/>
            <person name="Pati A."/>
            <person name="Petersen J."/>
            <person name="Piekarski T."/>
            <person name="Pommerenke C."/>
            <person name="Pradella S."/>
            <person name="Pukall R."/>
            <person name="Rabus R."/>
            <person name="Stackebrandt E."/>
            <person name="Thole S."/>
            <person name="Thompson L."/>
            <person name="Tielen P."/>
            <person name="Tomasch J."/>
            <person name="von Jan M."/>
            <person name="Wanphrut N."/>
            <person name="Wichels A."/>
            <person name="Zech H."/>
            <person name="Simon M."/>
        </authorList>
    </citation>
    <scope>NUCLEOTIDE SEQUENCE [LARGE SCALE GENOMIC DNA]</scope>
    <source>
        <strain>DSM 16493 / NCIMB 14021 / DFL 12</strain>
    </source>
</reference>
<sequence>MLTRKQIELLEFIHKRLQRDGVPPSFDEMKDALDLRSKSGIHRLITALEERGFIRRLAHKARAIEIVKLPEALMGSMQGGFAPQVIDGDRLDPPVGAMPVSGIHAVELPVMGKIAAGTPIEAISEVSHTVAVPGQMMRQDAEHYALEVKGDSMINAGINNGDIVVIRETSVAESGDIVVALVDGHEATLKTLRKRGNAIALEAANPAYETRVYPAEMVRVQGKLVGLIRSY</sequence>
<protein>
    <recommendedName>
        <fullName evidence="1">LexA repressor</fullName>
        <ecNumber evidence="1">3.4.21.88</ecNumber>
    </recommendedName>
</protein>
<comment type="function">
    <text evidence="1">Represses a number of genes involved in the response to DNA damage (SOS response), including recA and lexA. In the presence of single-stranded DNA, RecA interacts with LexA causing an autocatalytic cleavage which disrupts the DNA-binding part of LexA, leading to derepression of the SOS regulon and eventually DNA repair.</text>
</comment>
<comment type="catalytic activity">
    <reaction evidence="1">
        <text>Hydrolysis of Ala-|-Gly bond in repressor LexA.</text>
        <dbReference type="EC" id="3.4.21.88"/>
    </reaction>
</comment>
<comment type="subunit">
    <text evidence="1">Homodimer.</text>
</comment>
<comment type="similarity">
    <text evidence="1">Belongs to the peptidase S24 family.</text>
</comment>
<name>LEXA_DINSH</name>
<dbReference type="EC" id="3.4.21.88" evidence="1"/>
<dbReference type="EMBL" id="CP000830">
    <property type="protein sequence ID" value="ABV93545.1"/>
    <property type="molecule type" value="Genomic_DNA"/>
</dbReference>
<dbReference type="RefSeq" id="WP_012178475.1">
    <property type="nucleotide sequence ID" value="NC_009952.1"/>
</dbReference>
<dbReference type="SMR" id="A8LMK0"/>
<dbReference type="STRING" id="398580.Dshi_1803"/>
<dbReference type="MEROPS" id="S24.001"/>
<dbReference type="KEGG" id="dsh:Dshi_1803"/>
<dbReference type="eggNOG" id="COG1974">
    <property type="taxonomic scope" value="Bacteria"/>
</dbReference>
<dbReference type="HOGENOM" id="CLU_066192_45_2_5"/>
<dbReference type="OrthoDB" id="9802364at2"/>
<dbReference type="Proteomes" id="UP000006833">
    <property type="component" value="Chromosome"/>
</dbReference>
<dbReference type="GO" id="GO:0003677">
    <property type="term" value="F:DNA binding"/>
    <property type="evidence" value="ECO:0007669"/>
    <property type="project" value="UniProtKB-UniRule"/>
</dbReference>
<dbReference type="GO" id="GO:0004252">
    <property type="term" value="F:serine-type endopeptidase activity"/>
    <property type="evidence" value="ECO:0007669"/>
    <property type="project" value="UniProtKB-UniRule"/>
</dbReference>
<dbReference type="GO" id="GO:0006281">
    <property type="term" value="P:DNA repair"/>
    <property type="evidence" value="ECO:0007669"/>
    <property type="project" value="UniProtKB-UniRule"/>
</dbReference>
<dbReference type="GO" id="GO:0006260">
    <property type="term" value="P:DNA replication"/>
    <property type="evidence" value="ECO:0007669"/>
    <property type="project" value="UniProtKB-UniRule"/>
</dbReference>
<dbReference type="GO" id="GO:0045892">
    <property type="term" value="P:negative regulation of DNA-templated transcription"/>
    <property type="evidence" value="ECO:0007669"/>
    <property type="project" value="UniProtKB-UniRule"/>
</dbReference>
<dbReference type="GO" id="GO:0006508">
    <property type="term" value="P:proteolysis"/>
    <property type="evidence" value="ECO:0007669"/>
    <property type="project" value="InterPro"/>
</dbReference>
<dbReference type="GO" id="GO:0009432">
    <property type="term" value="P:SOS response"/>
    <property type="evidence" value="ECO:0007669"/>
    <property type="project" value="UniProtKB-UniRule"/>
</dbReference>
<dbReference type="CDD" id="cd06529">
    <property type="entry name" value="S24_LexA-like"/>
    <property type="match status" value="1"/>
</dbReference>
<dbReference type="FunFam" id="1.10.10.10:FF:000102">
    <property type="entry name" value="LexA repressor"/>
    <property type="match status" value="1"/>
</dbReference>
<dbReference type="FunFam" id="2.10.109.10:FF:000001">
    <property type="entry name" value="LexA repressor"/>
    <property type="match status" value="1"/>
</dbReference>
<dbReference type="Gene3D" id="2.10.109.10">
    <property type="entry name" value="Umud Fragment, subunit A"/>
    <property type="match status" value="1"/>
</dbReference>
<dbReference type="Gene3D" id="1.10.10.10">
    <property type="entry name" value="Winged helix-like DNA-binding domain superfamily/Winged helix DNA-binding domain"/>
    <property type="match status" value="1"/>
</dbReference>
<dbReference type="HAMAP" id="MF_00015">
    <property type="entry name" value="LexA"/>
    <property type="match status" value="1"/>
</dbReference>
<dbReference type="InterPro" id="IPR006200">
    <property type="entry name" value="LexA"/>
</dbReference>
<dbReference type="InterPro" id="IPR039418">
    <property type="entry name" value="LexA-like"/>
</dbReference>
<dbReference type="InterPro" id="IPR036286">
    <property type="entry name" value="LexA/Signal_pep-like_sf"/>
</dbReference>
<dbReference type="InterPro" id="IPR006199">
    <property type="entry name" value="LexA_DNA-bd_dom"/>
</dbReference>
<dbReference type="InterPro" id="IPR050077">
    <property type="entry name" value="LexA_repressor"/>
</dbReference>
<dbReference type="InterPro" id="IPR006197">
    <property type="entry name" value="Peptidase_S24_LexA"/>
</dbReference>
<dbReference type="InterPro" id="IPR015927">
    <property type="entry name" value="Peptidase_S24_S26A/B/C"/>
</dbReference>
<dbReference type="InterPro" id="IPR036388">
    <property type="entry name" value="WH-like_DNA-bd_sf"/>
</dbReference>
<dbReference type="InterPro" id="IPR036390">
    <property type="entry name" value="WH_DNA-bd_sf"/>
</dbReference>
<dbReference type="NCBIfam" id="TIGR00498">
    <property type="entry name" value="lexA"/>
    <property type="match status" value="1"/>
</dbReference>
<dbReference type="PANTHER" id="PTHR33516">
    <property type="entry name" value="LEXA REPRESSOR"/>
    <property type="match status" value="1"/>
</dbReference>
<dbReference type="PANTHER" id="PTHR33516:SF2">
    <property type="entry name" value="LEXA REPRESSOR-RELATED"/>
    <property type="match status" value="1"/>
</dbReference>
<dbReference type="Pfam" id="PF01726">
    <property type="entry name" value="LexA_DNA_bind"/>
    <property type="match status" value="1"/>
</dbReference>
<dbReference type="Pfam" id="PF00717">
    <property type="entry name" value="Peptidase_S24"/>
    <property type="match status" value="1"/>
</dbReference>
<dbReference type="PRINTS" id="PR00726">
    <property type="entry name" value="LEXASERPTASE"/>
</dbReference>
<dbReference type="SUPFAM" id="SSF51306">
    <property type="entry name" value="LexA/Signal peptidase"/>
    <property type="match status" value="1"/>
</dbReference>
<dbReference type="SUPFAM" id="SSF46785">
    <property type="entry name" value="Winged helix' DNA-binding domain"/>
    <property type="match status" value="1"/>
</dbReference>
<organism>
    <name type="scientific">Dinoroseobacter shibae (strain DSM 16493 / NCIMB 14021 / DFL 12)</name>
    <dbReference type="NCBI Taxonomy" id="398580"/>
    <lineage>
        <taxon>Bacteria</taxon>
        <taxon>Pseudomonadati</taxon>
        <taxon>Pseudomonadota</taxon>
        <taxon>Alphaproteobacteria</taxon>
        <taxon>Rhodobacterales</taxon>
        <taxon>Roseobacteraceae</taxon>
        <taxon>Dinoroseobacter</taxon>
    </lineage>
</organism>
<proteinExistence type="inferred from homology"/>
<accession>A8LMK0</accession>
<keyword id="KW-0068">Autocatalytic cleavage</keyword>
<keyword id="KW-0227">DNA damage</keyword>
<keyword id="KW-0234">DNA repair</keyword>
<keyword id="KW-0235">DNA replication</keyword>
<keyword id="KW-0238">DNA-binding</keyword>
<keyword id="KW-0378">Hydrolase</keyword>
<keyword id="KW-1185">Reference proteome</keyword>
<keyword id="KW-0678">Repressor</keyword>
<keyword id="KW-0742">SOS response</keyword>
<keyword id="KW-0804">Transcription</keyword>
<keyword id="KW-0805">Transcription regulation</keyword>